<keyword id="KW-0488">Methylation</keyword>
<keyword id="KW-0687">Ribonucleoprotein</keyword>
<keyword id="KW-0689">Ribosomal protein</keyword>
<keyword id="KW-0694">RNA-binding</keyword>
<keyword id="KW-0699">rRNA-binding</keyword>
<keyword id="KW-0820">tRNA-binding</keyword>
<feature type="chain" id="PRO_1000123534" description="Small ribosomal subunit protein uS12">
    <location>
        <begin position="1"/>
        <end position="131"/>
    </location>
</feature>
<feature type="region of interest" description="Disordered" evidence="3">
    <location>
        <begin position="106"/>
        <end position="131"/>
    </location>
</feature>
<feature type="compositionally biased region" description="Basic residues" evidence="3">
    <location>
        <begin position="112"/>
        <end position="124"/>
    </location>
</feature>
<feature type="modified residue" description="3-methylthioaspartic acid" evidence="1">
    <location>
        <position position="89"/>
    </location>
</feature>
<evidence type="ECO:0000250" key="1"/>
<evidence type="ECO:0000255" key="2">
    <source>
        <dbReference type="HAMAP-Rule" id="MF_00403"/>
    </source>
</evidence>
<evidence type="ECO:0000256" key="3">
    <source>
        <dbReference type="SAM" id="MobiDB-lite"/>
    </source>
</evidence>
<evidence type="ECO:0000305" key="4"/>
<sequence>MPTINQLITNGRKGIIKKTKSPALKNCPQRRGVCTRVYTVTPRKPNSALRKVARVRLTSGYEISSYIPGEGHNLQEHSLVLIRGGRIRDLPGVRYHIIRGTLDTAGVDGRKQGRSKYGAKKAKVAKTASAK</sequence>
<gene>
    <name evidence="2" type="primary">rpsL</name>
    <name type="ordered locus">TGRD_076</name>
</gene>
<reference key="1">
    <citation type="journal article" date="2008" name="Proc. Natl. Acad. Sci. U.S.A.">
        <title>Complete genome of the uncultured termite group 1 bacteria in a single host protist cell.</title>
        <authorList>
            <person name="Hongoh Y."/>
            <person name="Sharma V.K."/>
            <person name="Prakash T."/>
            <person name="Noda S."/>
            <person name="Taylor T.D."/>
            <person name="Kudo T."/>
            <person name="Sakaki Y."/>
            <person name="Toyoda A."/>
            <person name="Hattori M."/>
            <person name="Ohkuma M."/>
        </authorList>
    </citation>
    <scope>NUCLEOTIDE SEQUENCE [LARGE SCALE GENOMIC DNA]</scope>
</reference>
<comment type="function">
    <text evidence="2">With S4 and S5 plays an important role in translational accuracy.</text>
</comment>
<comment type="function">
    <text evidence="2">Interacts with and stabilizes bases of the 16S rRNA that are involved in tRNA selection in the A site and with the mRNA backbone. Located at the interface of the 30S and 50S subunits, it traverses the body of the 30S subunit contacting proteins on the other side and probably holding the rRNA structure together. The combined cluster of proteins S8, S12 and S17 appears to hold together the shoulder and platform of the 30S subunit.</text>
</comment>
<comment type="subunit">
    <text evidence="2">Part of the 30S ribosomal subunit. Contacts proteins S8 and S17. May interact with IF1 in the 30S initiation complex.</text>
</comment>
<comment type="similarity">
    <text evidence="2">Belongs to the universal ribosomal protein uS12 family.</text>
</comment>
<name>RS12_ENDTX</name>
<organism>
    <name type="scientific">Endomicrobium trichonymphae</name>
    <dbReference type="NCBI Taxonomy" id="1408204"/>
    <lineage>
        <taxon>Bacteria</taxon>
        <taxon>Pseudomonadati</taxon>
        <taxon>Elusimicrobiota</taxon>
        <taxon>Endomicrobiia</taxon>
        <taxon>Endomicrobiales</taxon>
        <taxon>Endomicrobiaceae</taxon>
        <taxon>Candidatus Endomicrobiellum</taxon>
    </lineage>
</organism>
<protein>
    <recommendedName>
        <fullName evidence="2">Small ribosomal subunit protein uS12</fullName>
    </recommendedName>
    <alternativeName>
        <fullName evidence="4">30S ribosomal protein S12</fullName>
    </alternativeName>
</protein>
<proteinExistence type="inferred from homology"/>
<accession>B1GZ77</accession>
<dbReference type="EMBL" id="AP009510">
    <property type="protein sequence ID" value="BAG13559.1"/>
    <property type="molecule type" value="Genomic_DNA"/>
</dbReference>
<dbReference type="RefSeq" id="WP_015423088.1">
    <property type="nucleotide sequence ID" value="NC_020419.1"/>
</dbReference>
<dbReference type="SMR" id="B1GZ77"/>
<dbReference type="STRING" id="471821.TGRD_076"/>
<dbReference type="KEGG" id="eti:RSTT_061"/>
<dbReference type="KEGG" id="rsd:TGRD_076"/>
<dbReference type="PATRIC" id="fig|471821.5.peg.119"/>
<dbReference type="HOGENOM" id="CLU_104295_1_2_0"/>
<dbReference type="OrthoDB" id="9802366at2"/>
<dbReference type="Proteomes" id="UP000001691">
    <property type="component" value="Chromosome"/>
</dbReference>
<dbReference type="GO" id="GO:0015935">
    <property type="term" value="C:small ribosomal subunit"/>
    <property type="evidence" value="ECO:0007669"/>
    <property type="project" value="InterPro"/>
</dbReference>
<dbReference type="GO" id="GO:0019843">
    <property type="term" value="F:rRNA binding"/>
    <property type="evidence" value="ECO:0007669"/>
    <property type="project" value="UniProtKB-UniRule"/>
</dbReference>
<dbReference type="GO" id="GO:0003735">
    <property type="term" value="F:structural constituent of ribosome"/>
    <property type="evidence" value="ECO:0007669"/>
    <property type="project" value="InterPro"/>
</dbReference>
<dbReference type="GO" id="GO:0000049">
    <property type="term" value="F:tRNA binding"/>
    <property type="evidence" value="ECO:0007669"/>
    <property type="project" value="UniProtKB-UniRule"/>
</dbReference>
<dbReference type="GO" id="GO:0006412">
    <property type="term" value="P:translation"/>
    <property type="evidence" value="ECO:0007669"/>
    <property type="project" value="UniProtKB-UniRule"/>
</dbReference>
<dbReference type="CDD" id="cd03368">
    <property type="entry name" value="Ribosomal_S12"/>
    <property type="match status" value="1"/>
</dbReference>
<dbReference type="FunFam" id="2.40.50.140:FF:000001">
    <property type="entry name" value="30S ribosomal protein S12"/>
    <property type="match status" value="1"/>
</dbReference>
<dbReference type="Gene3D" id="2.40.50.140">
    <property type="entry name" value="Nucleic acid-binding proteins"/>
    <property type="match status" value="1"/>
</dbReference>
<dbReference type="HAMAP" id="MF_00403_B">
    <property type="entry name" value="Ribosomal_uS12_B"/>
    <property type="match status" value="1"/>
</dbReference>
<dbReference type="InterPro" id="IPR012340">
    <property type="entry name" value="NA-bd_OB-fold"/>
</dbReference>
<dbReference type="InterPro" id="IPR006032">
    <property type="entry name" value="Ribosomal_uS12"/>
</dbReference>
<dbReference type="InterPro" id="IPR005679">
    <property type="entry name" value="Ribosomal_uS12_bac"/>
</dbReference>
<dbReference type="NCBIfam" id="TIGR00981">
    <property type="entry name" value="rpsL_bact"/>
    <property type="match status" value="1"/>
</dbReference>
<dbReference type="PANTHER" id="PTHR11652">
    <property type="entry name" value="30S RIBOSOMAL PROTEIN S12 FAMILY MEMBER"/>
    <property type="match status" value="1"/>
</dbReference>
<dbReference type="Pfam" id="PF00164">
    <property type="entry name" value="Ribosom_S12_S23"/>
    <property type="match status" value="1"/>
</dbReference>
<dbReference type="PIRSF" id="PIRSF002133">
    <property type="entry name" value="Ribosomal_S12/S23"/>
    <property type="match status" value="1"/>
</dbReference>
<dbReference type="PRINTS" id="PR01034">
    <property type="entry name" value="RIBOSOMALS12"/>
</dbReference>
<dbReference type="SUPFAM" id="SSF50249">
    <property type="entry name" value="Nucleic acid-binding proteins"/>
    <property type="match status" value="1"/>
</dbReference>
<dbReference type="PROSITE" id="PS00055">
    <property type="entry name" value="RIBOSOMAL_S12"/>
    <property type="match status" value="1"/>
</dbReference>